<organism>
    <name type="scientific">Conasprella longurionis</name>
    <name type="common">Cone snail</name>
    <name type="synonym">Conus longurionis</name>
    <dbReference type="NCBI Taxonomy" id="1077918"/>
    <lineage>
        <taxon>Eukaryota</taxon>
        <taxon>Metazoa</taxon>
        <taxon>Spiralia</taxon>
        <taxon>Lophotrochozoa</taxon>
        <taxon>Mollusca</taxon>
        <taxon>Gastropoda</taxon>
        <taxon>Caenogastropoda</taxon>
        <taxon>Neogastropoda</taxon>
        <taxon>Conoidea</taxon>
        <taxon>Conidae</taxon>
        <taxon>Conasprella</taxon>
        <taxon>Fusiconus</taxon>
    </lineage>
</organism>
<evidence type="ECO:0000250" key="1"/>
<evidence type="ECO:0000250" key="2">
    <source>
        <dbReference type="UniProtKB" id="P0CH19"/>
    </source>
</evidence>
<evidence type="ECO:0000269" key="3">
    <source>
    </source>
</evidence>
<evidence type="ECO:0000303" key="4">
    <source>
    </source>
</evidence>
<dbReference type="SMR" id="P0DOZ1"/>
<dbReference type="GO" id="GO:0005576">
    <property type="term" value="C:extracellular region"/>
    <property type="evidence" value="ECO:0007669"/>
    <property type="project" value="UniProtKB-SubCell"/>
</dbReference>
<dbReference type="GO" id="GO:0090729">
    <property type="term" value="F:toxin activity"/>
    <property type="evidence" value="ECO:0007669"/>
    <property type="project" value="UniProtKB-KW"/>
</dbReference>
<protein>
    <recommendedName>
        <fullName evidence="4">Conotoxin Lo6/7b</fullName>
    </recommendedName>
</protein>
<feature type="peptide" id="PRO_0000439363" description="Conotoxin Lo6/7b" evidence="3">
    <location>
        <begin position="1"/>
        <end position="27"/>
    </location>
</feature>
<feature type="modified residue" description="Tyrosine amide" evidence="3">
    <location>
        <position position="27"/>
    </location>
</feature>
<feature type="disulfide bond" evidence="1">
    <location>
        <begin position="2"/>
        <end position="16"/>
    </location>
</feature>
<feature type="disulfide bond" evidence="1">
    <location>
        <begin position="9"/>
        <end position="19"/>
    </location>
</feature>
<feature type="disulfide bond" evidence="1">
    <location>
        <begin position="15"/>
        <end position="26"/>
    </location>
</feature>
<proteinExistence type="evidence at protein level"/>
<reference key="1">
    <citation type="journal article" date="2016" name="Mar. Drugs">
        <title>Novel conopeptides of largely unexplored indo Pacific Conus sp.</title>
        <authorList>
            <person name="Lebbe E.K."/>
            <person name="Ghequire M.G."/>
            <person name="Peigneur S."/>
            <person name="Mille B.G."/>
            <person name="Devi P."/>
            <person name="Ravichandran S."/>
            <person name="Waelkens E."/>
            <person name="D'Souza L."/>
            <person name="De Mot R."/>
            <person name="Tytgat J."/>
        </authorList>
    </citation>
    <scope>PROTEIN SEQUENCE</scope>
    <scope>AMIDATION AT TYR-27</scope>
    <scope>SUBCELLULAR LOCATION</scope>
    <scope>TISSUE SPECIFICITY</scope>
    <scope>MASS SPECTROMETRY</scope>
    <scope>SYNTHESIS</scope>
    <source>
        <tissue>Venom</tissue>
    </source>
</reference>
<comment type="function">
    <text evidence="3">1 uM of this toxin does not show any effect on voltage-gated sodium and potassium channels. Does not show antibacterial activity on both Gram-negative and Gram-positive bacteria (PubMed:27801785).</text>
</comment>
<comment type="subcellular location">
    <subcellularLocation>
        <location evidence="3">Secreted</location>
    </subcellularLocation>
</comment>
<comment type="tissue specificity">
    <text evidence="3">Expressed by the venom duct.</text>
</comment>
<comment type="domain">
    <text evidence="2">The presence of a 'disulfide through disulfide knot' structurally defines this protein as a knottin.</text>
</comment>
<comment type="domain">
    <text>The cysteine framework is VI/VII (C-C-CC-C-C).</text>
</comment>
<comment type="mass spectrometry" mass="2775.1" method="MALDI" evidence="3"/>
<comment type="miscellaneous">
    <text evidence="3">Negative results: does not show effect on Nav1.1, Nav1.2, Nav1.3, Nav1.4, Nav1.5, Nav1.6, Nav1.7 (PubMed:27801785). Does not show effect on Kv1.1, Kv1.3, Kv1.4, Kv1.5, Kv1.6 and Kv3.1 (PubMed:27801785).</text>
</comment>
<keyword id="KW-0027">Amidation</keyword>
<keyword id="KW-0903">Direct protein sequencing</keyword>
<keyword id="KW-1015">Disulfide bond</keyword>
<keyword id="KW-0960">Knottin</keyword>
<keyword id="KW-0964">Secreted</keyword>
<keyword id="KW-0800">Toxin</keyword>
<name>CU6B_CONLG</name>
<accession>P0DOZ1</accession>
<sequence length="27" mass="2782">SCLSSGALCGIDSNCCNGCNVPRNQCY</sequence>